<protein>
    <recommendedName>
        <fullName>Glucosidase 2 subunit beta</fullName>
    </recommendedName>
    <alternativeName>
        <fullName>80K-H protein</fullName>
    </alternativeName>
    <alternativeName>
        <fullName evidence="12">Glucosidase II subunit beta</fullName>
    </alternativeName>
    <alternativeName>
        <fullName>Protein kinase C substrate 60.1 kDa protein heavy chain</fullName>
        <shortName>PKCSH</shortName>
    </alternativeName>
</protein>
<evidence type="ECO:0000250" key="1">
    <source>
        <dbReference type="UniProtKB" id="P14314"/>
    </source>
</evidence>
<evidence type="ECO:0000255" key="2"/>
<evidence type="ECO:0000255" key="3">
    <source>
        <dbReference type="PROSITE-ProRule" id="PRU00124"/>
    </source>
</evidence>
<evidence type="ECO:0000255" key="4">
    <source>
        <dbReference type="PROSITE-ProRule" id="PRU00448"/>
    </source>
</evidence>
<evidence type="ECO:0000255" key="5">
    <source>
        <dbReference type="PROSITE-ProRule" id="PRU01262"/>
    </source>
</evidence>
<evidence type="ECO:0000255" key="6">
    <source>
        <dbReference type="PROSITE-ProRule" id="PRU10138"/>
    </source>
</evidence>
<evidence type="ECO:0000256" key="7">
    <source>
        <dbReference type="SAM" id="MobiDB-lite"/>
    </source>
</evidence>
<evidence type="ECO:0000269" key="8">
    <source>
    </source>
</evidence>
<evidence type="ECO:0000269" key="9">
    <source>
    </source>
</evidence>
<evidence type="ECO:0000269" key="10">
    <source>
    </source>
</evidence>
<evidence type="ECO:0000303" key="11">
    <source>
    </source>
</evidence>
<evidence type="ECO:0000303" key="12">
    <source>
    </source>
</evidence>
<evidence type="ECO:0000305" key="13"/>
<evidence type="ECO:0000312" key="14">
    <source>
        <dbReference type="MGI" id="MGI:107877"/>
    </source>
</evidence>
<evidence type="ECO:0007744" key="15">
    <source>
        <dbReference type="PDB" id="5F0E"/>
    </source>
</evidence>
<evidence type="ECO:0007744" key="16">
    <source>
        <dbReference type="PDB" id="5H9O"/>
    </source>
</evidence>
<evidence type="ECO:0007744" key="17">
    <source>
        <dbReference type="PDB" id="5HJO"/>
    </source>
</evidence>
<evidence type="ECO:0007744" key="18">
    <source>
        <dbReference type="PDB" id="5HJR"/>
    </source>
</evidence>
<evidence type="ECO:0007744" key="19">
    <source>
        <dbReference type="PDB" id="5IED"/>
    </source>
</evidence>
<evidence type="ECO:0007744" key="20">
    <source>
        <dbReference type="PDB" id="5IEE"/>
    </source>
</evidence>
<evidence type="ECO:0007744" key="21">
    <source>
        <dbReference type="PDB" id="5IEF"/>
    </source>
</evidence>
<evidence type="ECO:0007744" key="22">
    <source>
        <dbReference type="PDB" id="5IEG"/>
    </source>
</evidence>
<evidence type="ECO:0007744" key="23">
    <source>
    </source>
</evidence>
<evidence type="ECO:0007829" key="24">
    <source>
        <dbReference type="PDB" id="5F0E"/>
    </source>
</evidence>
<evidence type="ECO:0007829" key="25">
    <source>
        <dbReference type="PDB" id="7K9T"/>
    </source>
</evidence>
<feature type="signal peptide" evidence="10">
    <location>
        <begin position="1"/>
        <end position="14"/>
    </location>
</feature>
<feature type="chain" id="PRO_0000004144" description="Glucosidase 2 subunit beta">
    <location>
        <begin position="15"/>
        <end position="521"/>
    </location>
</feature>
<feature type="domain" description="LDL-receptor class A 1" evidence="3">
    <location>
        <begin position="37"/>
        <end position="71"/>
    </location>
</feature>
<feature type="domain" description="LDL-receptor class A 2" evidence="3">
    <location>
        <begin position="69"/>
        <end position="113"/>
    </location>
</feature>
<feature type="domain" description="EF-hand 1" evidence="4">
    <location>
        <begin position="209"/>
        <end position="244"/>
    </location>
</feature>
<feature type="domain" description="EF-hand 2" evidence="13">
    <location>
        <begin position="245"/>
        <end position="290"/>
    </location>
</feature>
<feature type="domain" description="MRH" evidence="5">
    <location>
        <begin position="406"/>
        <end position="507"/>
    </location>
</feature>
<feature type="region of interest" description="Disordered" evidence="7">
    <location>
        <begin position="226"/>
        <end position="267"/>
    </location>
</feature>
<feature type="region of interest" description="Disordered" evidence="7">
    <location>
        <begin position="280"/>
        <end position="350"/>
    </location>
</feature>
<feature type="short sequence motif" description="Prevents secretion from ER" evidence="6">
    <location>
        <begin position="518"/>
        <end position="521"/>
    </location>
</feature>
<feature type="compositionally biased region" description="Acidic residues" evidence="7">
    <location>
        <begin position="241"/>
        <end position="253"/>
    </location>
</feature>
<feature type="compositionally biased region" description="Acidic residues" evidence="7">
    <location>
        <begin position="308"/>
        <end position="331"/>
    </location>
</feature>
<feature type="compositionally biased region" description="Pro residues" evidence="7">
    <location>
        <begin position="332"/>
        <end position="343"/>
    </location>
</feature>
<feature type="binding site" evidence="9 17">
    <location>
        <position position="49"/>
    </location>
    <ligand>
        <name>substrate</name>
        <note>ligand shared with catalytic subunit</note>
    </ligand>
</feature>
<feature type="binding site" evidence="9 15 16 17 18 19 20 21 22">
    <location>
        <position position="50"/>
    </location>
    <ligand>
        <name>Ca(2+)</name>
        <dbReference type="ChEBI" id="CHEBI:29108"/>
        <label>1</label>
    </ligand>
</feature>
<feature type="binding site" evidence="9 15 16 17 18 19 20 21 22">
    <location>
        <position position="53"/>
    </location>
    <ligand>
        <name>Ca(2+)</name>
        <dbReference type="ChEBI" id="CHEBI:29108"/>
        <label>1</label>
    </ligand>
</feature>
<feature type="binding site" evidence="9 17">
    <location>
        <position position="53"/>
    </location>
    <ligand>
        <name>substrate</name>
        <note>ligand shared with catalytic subunit</note>
    </ligand>
</feature>
<feature type="binding site" evidence="9 15 16 17 18 19 20 21 22">
    <location>
        <position position="55"/>
    </location>
    <ligand>
        <name>Ca(2+)</name>
        <dbReference type="ChEBI" id="CHEBI:29108"/>
        <label>1</label>
    </ligand>
</feature>
<feature type="binding site" evidence="9 15 16 17 18 19 20 21 22">
    <location>
        <position position="57"/>
    </location>
    <ligand>
        <name>Ca(2+)</name>
        <dbReference type="ChEBI" id="CHEBI:29108"/>
        <label>1</label>
    </ligand>
</feature>
<feature type="binding site" evidence="9 15 16 17 18 19 20 21 22">
    <location>
        <position position="63"/>
    </location>
    <ligand>
        <name>Ca(2+)</name>
        <dbReference type="ChEBI" id="CHEBI:29108"/>
        <label>1</label>
    </ligand>
</feature>
<feature type="binding site" evidence="9 15 16 17 18 19 20 21 22">
    <location>
        <position position="64"/>
    </location>
    <ligand>
        <name>Ca(2+)</name>
        <dbReference type="ChEBI" id="CHEBI:29108"/>
        <label>1</label>
    </ligand>
</feature>
<feature type="binding site" evidence="9 15 16 17 18 19 20 21 22">
    <location>
        <position position="91"/>
    </location>
    <ligand>
        <name>Ca(2+)</name>
        <dbReference type="ChEBI" id="CHEBI:29108"/>
        <label>2</label>
    </ligand>
</feature>
<feature type="binding site" evidence="9 15 16 17 18 19 20 21 22">
    <location>
        <position position="94"/>
    </location>
    <ligand>
        <name>Ca(2+)</name>
        <dbReference type="ChEBI" id="CHEBI:29108"/>
        <label>2</label>
    </ligand>
</feature>
<feature type="binding site" evidence="9 15 16 17 18 19 20 21 22">
    <location>
        <position position="96"/>
    </location>
    <ligand>
        <name>Ca(2+)</name>
        <dbReference type="ChEBI" id="CHEBI:29108"/>
        <label>2</label>
    </ligand>
</feature>
<feature type="binding site" evidence="9 15 16 17 18 19 20 21 22">
    <location>
        <position position="98"/>
    </location>
    <ligand>
        <name>Ca(2+)</name>
        <dbReference type="ChEBI" id="CHEBI:29108"/>
        <label>2</label>
    </ligand>
</feature>
<feature type="binding site" evidence="9 15 16 17 18 19 20 21 22">
    <location>
        <position position="104"/>
    </location>
    <ligand>
        <name>Ca(2+)</name>
        <dbReference type="ChEBI" id="CHEBI:29108"/>
        <label>2</label>
    </ligand>
</feature>
<feature type="binding site" evidence="9 15 16 17 18 19 20 21 22">
    <location>
        <position position="105"/>
    </location>
    <ligand>
        <name>Ca(2+)</name>
        <dbReference type="ChEBI" id="CHEBI:29108"/>
        <label>2</label>
    </ligand>
</feature>
<feature type="binding site" evidence="4">
    <location>
        <position position="222"/>
    </location>
    <ligand>
        <name>Ca(2+)</name>
        <dbReference type="ChEBI" id="CHEBI:29108"/>
        <label>3</label>
    </ligand>
</feature>
<feature type="binding site" evidence="4">
    <location>
        <position position="224"/>
    </location>
    <ligand>
        <name>Ca(2+)</name>
        <dbReference type="ChEBI" id="CHEBI:29108"/>
        <label>3</label>
    </ligand>
</feature>
<feature type="binding site" evidence="4">
    <location>
        <position position="226"/>
    </location>
    <ligand>
        <name>Ca(2+)</name>
        <dbReference type="ChEBI" id="CHEBI:29108"/>
        <label>3</label>
    </ligand>
</feature>
<feature type="binding site" evidence="4">
    <location>
        <position position="228"/>
    </location>
    <ligand>
        <name>Ca(2+)</name>
        <dbReference type="ChEBI" id="CHEBI:29108"/>
        <label>3</label>
    </ligand>
</feature>
<feature type="binding site" evidence="4">
    <location>
        <position position="233"/>
    </location>
    <ligand>
        <name>Ca(2+)</name>
        <dbReference type="ChEBI" id="CHEBI:29108"/>
        <label>3</label>
    </ligand>
</feature>
<feature type="modified residue" description="Phosphoserine" evidence="1">
    <location>
        <position position="24"/>
    </location>
</feature>
<feature type="modified residue" description="Phosphoserine; by PKC" evidence="2">
    <location>
        <position position="89"/>
    </location>
</feature>
<feature type="modified residue" description="N6-succinyllysine" evidence="23">
    <location>
        <position position="166"/>
    </location>
</feature>
<feature type="modified residue" description="Phosphoserine" evidence="1">
    <location>
        <position position="168"/>
    </location>
</feature>
<feature type="modified residue" description="Phosphoserine; by PKC" evidence="2">
    <location>
        <position position="376"/>
    </location>
</feature>
<feature type="modified residue" description="Phosphoserine; by PKC" evidence="2">
    <location>
        <position position="383"/>
    </location>
</feature>
<feature type="modified residue" description="Phosphoserine; by PKC" evidence="2">
    <location>
        <position position="427"/>
    </location>
</feature>
<feature type="glycosylation site" description="N-linked (GlcNAc...) asparagine" evidence="2">
    <location>
        <position position="72"/>
    </location>
</feature>
<feature type="glycosylation site" description="N-linked (GlcNAc...) asparagine" evidence="2">
    <location>
        <position position="469"/>
    </location>
</feature>
<feature type="disulfide bond" evidence="9 15 16 17 18 19 20 21 22">
    <location>
        <begin position="39"/>
        <end position="58"/>
    </location>
</feature>
<feature type="disulfide bond" evidence="9 15 16 17 18 19 20 21 22">
    <location>
        <begin position="56"/>
        <end position="70"/>
    </location>
</feature>
<feature type="disulfide bond" evidence="9 15 16 17 18 19 20 21 22">
    <location>
        <begin position="77"/>
        <end position="99"/>
    </location>
</feature>
<feature type="disulfide bond" evidence="9 15 16 17 18 19 20 21 22">
    <location>
        <begin position="97"/>
        <end position="112"/>
    </location>
</feature>
<feature type="disulfide bond" evidence="9 15 16 17 18 19 20 21 22">
    <location>
        <begin position="100"/>
        <end position="116"/>
    </location>
</feature>
<feature type="disulfide bond" evidence="5">
    <location>
        <begin position="408"/>
        <end position="421"/>
    </location>
</feature>
<feature type="disulfide bond" evidence="5">
    <location>
        <begin position="464"/>
        <end position="493"/>
    </location>
</feature>
<feature type="disulfide bond" evidence="5">
    <location>
        <begin position="478"/>
        <end position="505"/>
    </location>
</feature>
<feature type="splice variant" id="VSP_010672" description="In isoform 2." evidence="11">
    <original>E</original>
    <variation>EVQGEQPK</variation>
    <location>
        <position position="329"/>
    </location>
</feature>
<feature type="strand" evidence="25">
    <location>
        <begin position="36"/>
        <end position="38"/>
    </location>
</feature>
<feature type="strand" evidence="25">
    <location>
        <begin position="45"/>
        <end position="47"/>
    </location>
</feature>
<feature type="helix" evidence="24">
    <location>
        <begin position="48"/>
        <end position="50"/>
    </location>
</feature>
<feature type="strand" evidence="24">
    <location>
        <begin position="53"/>
        <end position="55"/>
    </location>
</feature>
<feature type="strand" evidence="24">
    <location>
        <begin position="74"/>
        <end position="77"/>
    </location>
</feature>
<feature type="strand" evidence="24">
    <location>
        <begin position="85"/>
        <end position="88"/>
    </location>
</feature>
<feature type="helix" evidence="24">
    <location>
        <begin position="89"/>
        <end position="91"/>
    </location>
</feature>
<feature type="strand" evidence="24">
    <location>
        <begin position="94"/>
        <end position="96"/>
    </location>
</feature>
<feature type="strand" evidence="24">
    <location>
        <begin position="106"/>
        <end position="109"/>
    </location>
</feature>
<accession>O08795</accession>
<accession>Q921X2</accession>
<keyword id="KW-0002">3D-structure</keyword>
<keyword id="KW-0025">Alternative splicing</keyword>
<keyword id="KW-0106">Calcium</keyword>
<keyword id="KW-0903">Direct protein sequencing</keyword>
<keyword id="KW-1015">Disulfide bond</keyword>
<keyword id="KW-0256">Endoplasmic reticulum</keyword>
<keyword id="KW-0325">Glycoprotein</keyword>
<keyword id="KW-0479">Metal-binding</keyword>
<keyword id="KW-0597">Phosphoprotein</keyword>
<keyword id="KW-1185">Reference proteome</keyword>
<keyword id="KW-0677">Repeat</keyword>
<keyword id="KW-0732">Signal</keyword>
<dbReference type="EMBL" id="U92794">
    <property type="protein sequence ID" value="AAC53183.1"/>
    <property type="molecule type" value="mRNA"/>
</dbReference>
<dbReference type="EMBL" id="BC009816">
    <property type="protein sequence ID" value="AAH09816.1"/>
    <property type="molecule type" value="mRNA"/>
</dbReference>
<dbReference type="CCDS" id="CCDS22918.1">
    <molecule id="O08795-1"/>
</dbReference>
<dbReference type="CCDS" id="CCDS80967.1">
    <molecule id="O08795-2"/>
</dbReference>
<dbReference type="RefSeq" id="NP_001280579.1">
    <molecule id="O08795-2"/>
    <property type="nucleotide sequence ID" value="NM_001293650.2"/>
</dbReference>
<dbReference type="RefSeq" id="NP_001280580.1">
    <molecule id="O08795-1"/>
    <property type="nucleotide sequence ID" value="NM_001293651.2"/>
</dbReference>
<dbReference type="RefSeq" id="NP_001407055.1">
    <molecule id="O08795-2"/>
    <property type="nucleotide sequence ID" value="NM_001420126.1"/>
</dbReference>
<dbReference type="RefSeq" id="NP_032951.1">
    <molecule id="O08795-1"/>
    <property type="nucleotide sequence ID" value="NM_008925.3"/>
</dbReference>
<dbReference type="RefSeq" id="XP_006510158.1">
    <property type="nucleotide sequence ID" value="XM_006510095.3"/>
</dbReference>
<dbReference type="RefSeq" id="XP_006510159.1">
    <molecule id="O08795-2"/>
    <property type="nucleotide sequence ID" value="XM_006510096.3"/>
</dbReference>
<dbReference type="RefSeq" id="XP_036010596.1">
    <molecule id="O08795-1"/>
    <property type="nucleotide sequence ID" value="XM_036154703.1"/>
</dbReference>
<dbReference type="PDB" id="5F0E">
    <property type="method" value="X-ray"/>
    <property type="resolution" value="1.74 A"/>
    <property type="chains" value="B=30-117"/>
</dbReference>
<dbReference type="PDB" id="5H9O">
    <property type="method" value="X-ray"/>
    <property type="resolution" value="2.37 A"/>
    <property type="chains" value="B/D=30-117"/>
</dbReference>
<dbReference type="PDB" id="5HJO">
    <property type="method" value="X-ray"/>
    <property type="resolution" value="2.29 A"/>
    <property type="chains" value="B/D=35-117"/>
</dbReference>
<dbReference type="PDB" id="5HJR">
    <property type="method" value="X-ray"/>
    <property type="resolution" value="2.40 A"/>
    <property type="chains" value="B/D=35-117"/>
</dbReference>
<dbReference type="PDB" id="5IED">
    <property type="method" value="X-ray"/>
    <property type="resolution" value="1.81 A"/>
    <property type="chains" value="B=30-117"/>
</dbReference>
<dbReference type="PDB" id="5IEE">
    <property type="method" value="X-ray"/>
    <property type="resolution" value="1.92 A"/>
    <property type="chains" value="B=30-117"/>
</dbReference>
<dbReference type="PDB" id="5IEF">
    <property type="method" value="X-ray"/>
    <property type="resolution" value="2.38 A"/>
    <property type="chains" value="B=30-117"/>
</dbReference>
<dbReference type="PDB" id="5IEG">
    <property type="method" value="X-ray"/>
    <property type="resolution" value="1.82 A"/>
    <property type="chains" value="B=30-117"/>
</dbReference>
<dbReference type="PDB" id="7JTY">
    <property type="method" value="X-ray"/>
    <property type="resolution" value="2.21 A"/>
    <property type="chains" value="B/D=15-517"/>
</dbReference>
<dbReference type="PDB" id="7K9N">
    <property type="method" value="X-ray"/>
    <property type="resolution" value="2.07 A"/>
    <property type="chains" value="B/D=15-517"/>
</dbReference>
<dbReference type="PDB" id="7K9O">
    <property type="method" value="X-ray"/>
    <property type="resolution" value="2.30 A"/>
    <property type="chains" value="B/D=15-517"/>
</dbReference>
<dbReference type="PDB" id="7K9Q">
    <property type="method" value="X-ray"/>
    <property type="resolution" value="2.30 A"/>
    <property type="chains" value="B/D=15-517"/>
</dbReference>
<dbReference type="PDB" id="7K9T">
    <property type="method" value="X-ray"/>
    <property type="resolution" value="2.10 A"/>
    <property type="chains" value="B/D=15-517"/>
</dbReference>
<dbReference type="PDB" id="7KAD">
    <property type="method" value="X-ray"/>
    <property type="resolution" value="2.51 A"/>
    <property type="chains" value="B/D=15-517"/>
</dbReference>
<dbReference type="PDB" id="7KB6">
    <property type="method" value="X-ray"/>
    <property type="resolution" value="2.20 A"/>
    <property type="chains" value="B/D=15-517"/>
</dbReference>
<dbReference type="PDB" id="7KB8">
    <property type="method" value="X-ray"/>
    <property type="resolution" value="2.38 A"/>
    <property type="chains" value="B/D=15-517"/>
</dbReference>
<dbReference type="PDB" id="7KBJ">
    <property type="method" value="X-ray"/>
    <property type="resolution" value="2.21 A"/>
    <property type="chains" value="B/D=15-117"/>
</dbReference>
<dbReference type="PDB" id="7KBR">
    <property type="method" value="X-ray"/>
    <property type="resolution" value="2.09 A"/>
    <property type="chains" value="B/D=15-117"/>
</dbReference>
<dbReference type="PDB" id="7KRY">
    <property type="method" value="X-ray"/>
    <property type="resolution" value="2.55 A"/>
    <property type="chains" value="B/D=15-517"/>
</dbReference>
<dbReference type="PDB" id="7L9E">
    <property type="method" value="X-ray"/>
    <property type="resolution" value="2.29 A"/>
    <property type="chains" value="B/D=15-117"/>
</dbReference>
<dbReference type="PDBsum" id="5F0E"/>
<dbReference type="PDBsum" id="5H9O"/>
<dbReference type="PDBsum" id="5HJO"/>
<dbReference type="PDBsum" id="5HJR"/>
<dbReference type="PDBsum" id="5IED"/>
<dbReference type="PDBsum" id="5IEE"/>
<dbReference type="PDBsum" id="5IEF"/>
<dbReference type="PDBsum" id="5IEG"/>
<dbReference type="PDBsum" id="7JTY"/>
<dbReference type="PDBsum" id="7K9N"/>
<dbReference type="PDBsum" id="7K9O"/>
<dbReference type="PDBsum" id="7K9Q"/>
<dbReference type="PDBsum" id="7K9T"/>
<dbReference type="PDBsum" id="7KAD"/>
<dbReference type="PDBsum" id="7KB6"/>
<dbReference type="PDBsum" id="7KB8"/>
<dbReference type="PDBsum" id="7KBJ"/>
<dbReference type="PDBsum" id="7KBR"/>
<dbReference type="PDBsum" id="7KRY"/>
<dbReference type="PDBsum" id="7L9E"/>
<dbReference type="SMR" id="O08795"/>
<dbReference type="BioGRID" id="202370">
    <property type="interactions" value="13"/>
</dbReference>
<dbReference type="FunCoup" id="O08795">
    <property type="interactions" value="4157"/>
</dbReference>
<dbReference type="IntAct" id="O08795">
    <property type="interactions" value="1"/>
</dbReference>
<dbReference type="STRING" id="10090.ENSMUSP00000110987"/>
<dbReference type="GlyConnect" id="2337">
    <property type="glycosylation" value="2 N-Linked glycans (1 site)"/>
</dbReference>
<dbReference type="GlyCosmos" id="O08795">
    <property type="glycosylation" value="2 sites, 2 glycans"/>
</dbReference>
<dbReference type="GlyGen" id="O08795">
    <property type="glycosylation" value="3 sites, 4 N-linked glycans (2 sites), 1 O-linked glycan (1 site)"/>
</dbReference>
<dbReference type="iPTMnet" id="O08795"/>
<dbReference type="PhosphoSitePlus" id="O08795"/>
<dbReference type="SwissPalm" id="O08795"/>
<dbReference type="CPTAC" id="non-CPTAC-3580"/>
<dbReference type="jPOST" id="O08795"/>
<dbReference type="PaxDb" id="10090-ENSMUSP00000110987"/>
<dbReference type="PeptideAtlas" id="O08795"/>
<dbReference type="ProteomicsDB" id="271398">
    <molecule id="O08795-1"/>
</dbReference>
<dbReference type="ProteomicsDB" id="271399">
    <molecule id="O08795-2"/>
</dbReference>
<dbReference type="Pumba" id="O08795"/>
<dbReference type="Antibodypedia" id="3848">
    <property type="antibodies" value="313 antibodies from 34 providers"/>
</dbReference>
<dbReference type="DNASU" id="19089"/>
<dbReference type="Ensembl" id="ENSMUST00000003493.9">
    <molecule id="O08795-1"/>
    <property type="protein sequence ID" value="ENSMUSP00000003493.8"/>
    <property type="gene ID" value="ENSMUSG00000003402.15"/>
</dbReference>
<dbReference type="Ensembl" id="ENSMUST00000115331.10">
    <molecule id="O08795-2"/>
    <property type="protein sequence ID" value="ENSMUSP00000110987.3"/>
    <property type="gene ID" value="ENSMUSG00000003402.15"/>
</dbReference>
<dbReference type="Ensembl" id="ENSMUST00000216344.2">
    <molecule id="O08795-1"/>
    <property type="protein sequence ID" value="ENSMUSP00000149936.2"/>
    <property type="gene ID" value="ENSMUSG00000003402.15"/>
</dbReference>
<dbReference type="GeneID" id="19089"/>
<dbReference type="KEGG" id="mmu:19089"/>
<dbReference type="UCSC" id="uc009oni.2">
    <molecule id="O08795-1"/>
    <property type="organism name" value="mouse"/>
</dbReference>
<dbReference type="UCSC" id="uc009onk.2">
    <molecule id="O08795-2"/>
    <property type="organism name" value="mouse"/>
</dbReference>
<dbReference type="AGR" id="MGI:107877"/>
<dbReference type="CTD" id="5589"/>
<dbReference type="MGI" id="MGI:107877">
    <property type="gene designation" value="Prkcsh"/>
</dbReference>
<dbReference type="VEuPathDB" id="HostDB:ENSMUSG00000003402"/>
<dbReference type="eggNOG" id="KOG2397">
    <property type="taxonomic scope" value="Eukaryota"/>
</dbReference>
<dbReference type="GeneTree" id="ENSGT00510000047770"/>
<dbReference type="HOGENOM" id="CLU_016834_1_0_1"/>
<dbReference type="InParanoid" id="O08795"/>
<dbReference type="OMA" id="YENGQHC"/>
<dbReference type="PhylomeDB" id="O08795"/>
<dbReference type="TreeFam" id="TF329550"/>
<dbReference type="Reactome" id="R-MMU-381426">
    <property type="pathway name" value="Regulation of Insulin-like Growth Factor (IGF) transport and uptake by Insulin-like Growth Factor Binding Proteins (IGFBPs)"/>
</dbReference>
<dbReference type="Reactome" id="R-MMU-8957275">
    <property type="pathway name" value="Post-translational protein phosphorylation"/>
</dbReference>
<dbReference type="UniPathway" id="UPA00957"/>
<dbReference type="BioGRID-ORCS" id="19089">
    <property type="hits" value="14 hits in 78 CRISPR screens"/>
</dbReference>
<dbReference type="ChiTaRS" id="Prkcsh">
    <property type="organism name" value="mouse"/>
</dbReference>
<dbReference type="PRO" id="PR:O08795"/>
<dbReference type="Proteomes" id="UP000000589">
    <property type="component" value="Chromosome 9"/>
</dbReference>
<dbReference type="RNAct" id="O08795">
    <property type="molecule type" value="protein"/>
</dbReference>
<dbReference type="Bgee" id="ENSMUSG00000003402">
    <property type="expression patterns" value="Expressed in choroid plexus of fourth ventricle and 274 other cell types or tissues"/>
</dbReference>
<dbReference type="ExpressionAtlas" id="O08795">
    <property type="expression patterns" value="baseline and differential"/>
</dbReference>
<dbReference type="GO" id="GO:0005783">
    <property type="term" value="C:endoplasmic reticulum"/>
    <property type="evidence" value="ECO:0000304"/>
    <property type="project" value="MGI"/>
</dbReference>
<dbReference type="GO" id="GO:0017177">
    <property type="term" value="C:glucosidase II complex"/>
    <property type="evidence" value="ECO:0000314"/>
    <property type="project" value="UniProtKB"/>
</dbReference>
<dbReference type="GO" id="GO:0043231">
    <property type="term" value="C:intracellular membrane-bounded organelle"/>
    <property type="evidence" value="ECO:0000250"/>
    <property type="project" value="UniProtKB"/>
</dbReference>
<dbReference type="GO" id="GO:0005509">
    <property type="term" value="F:calcium ion binding"/>
    <property type="evidence" value="ECO:0000314"/>
    <property type="project" value="UniProtKB"/>
</dbReference>
<dbReference type="GO" id="GO:0044877">
    <property type="term" value="F:protein-containing complex binding"/>
    <property type="evidence" value="ECO:0007669"/>
    <property type="project" value="Ensembl"/>
</dbReference>
<dbReference type="GO" id="GO:0003723">
    <property type="term" value="F:RNA binding"/>
    <property type="evidence" value="ECO:0000314"/>
    <property type="project" value="MGI"/>
</dbReference>
<dbReference type="GO" id="GO:0001701">
    <property type="term" value="P:in utero embryonic development"/>
    <property type="evidence" value="ECO:0000315"/>
    <property type="project" value="MGI"/>
</dbReference>
<dbReference type="GO" id="GO:0001889">
    <property type="term" value="P:liver development"/>
    <property type="evidence" value="ECO:0000316"/>
    <property type="project" value="MGI"/>
</dbReference>
<dbReference type="GO" id="GO:0006491">
    <property type="term" value="P:N-glycan processing"/>
    <property type="evidence" value="ECO:0000250"/>
    <property type="project" value="UniProtKB"/>
</dbReference>
<dbReference type="GO" id="GO:0010977">
    <property type="term" value="P:negative regulation of neuron projection development"/>
    <property type="evidence" value="ECO:0000315"/>
    <property type="project" value="MGI"/>
</dbReference>
<dbReference type="GO" id="GO:0071941">
    <property type="term" value="P:nitrogen cycle metabolic process"/>
    <property type="evidence" value="ECO:0000316"/>
    <property type="project" value="MGI"/>
</dbReference>
<dbReference type="FunFam" id="4.10.400.10:FF:000150">
    <property type="entry name" value="Glucosidase 2 subunit beta"/>
    <property type="match status" value="1"/>
</dbReference>
<dbReference type="FunFam" id="2.70.130.10:FF:000014">
    <property type="entry name" value="glucosidase 2 subunit beta isoform X1"/>
    <property type="match status" value="1"/>
</dbReference>
<dbReference type="Gene3D" id="1.10.238.10">
    <property type="entry name" value="EF-hand"/>
    <property type="match status" value="1"/>
</dbReference>
<dbReference type="Gene3D" id="4.10.400.10">
    <property type="entry name" value="Low-density Lipoprotein Receptor"/>
    <property type="match status" value="1"/>
</dbReference>
<dbReference type="Gene3D" id="2.70.130.10">
    <property type="entry name" value="Mannose-6-phosphate receptor binding domain"/>
    <property type="match status" value="1"/>
</dbReference>
<dbReference type="InterPro" id="IPR011992">
    <property type="entry name" value="EF-hand-dom_pair"/>
</dbReference>
<dbReference type="InterPro" id="IPR018247">
    <property type="entry name" value="EF_Hand_1_Ca_BS"/>
</dbReference>
<dbReference type="InterPro" id="IPR002048">
    <property type="entry name" value="EF_hand_dom"/>
</dbReference>
<dbReference type="InterPro" id="IPR039794">
    <property type="entry name" value="Gtb1-like"/>
</dbReference>
<dbReference type="InterPro" id="IPR036055">
    <property type="entry name" value="LDL_receptor-like_sf"/>
</dbReference>
<dbReference type="InterPro" id="IPR009011">
    <property type="entry name" value="Man6P_isomerase_rcpt-bd_dom_sf"/>
</dbReference>
<dbReference type="InterPro" id="IPR044865">
    <property type="entry name" value="MRH_dom"/>
</dbReference>
<dbReference type="InterPro" id="IPR036607">
    <property type="entry name" value="PRKCSH"/>
</dbReference>
<dbReference type="InterPro" id="IPR028146">
    <property type="entry name" value="PRKCSH_N"/>
</dbReference>
<dbReference type="PANTHER" id="PTHR12630:SF1">
    <property type="entry name" value="GLUCOSIDASE 2 SUBUNIT BETA"/>
    <property type="match status" value="1"/>
</dbReference>
<dbReference type="PANTHER" id="PTHR12630">
    <property type="entry name" value="N-LINKED OLIGOSACCHARIDE PROCESSING"/>
    <property type="match status" value="1"/>
</dbReference>
<dbReference type="Pfam" id="PF13202">
    <property type="entry name" value="EF-hand_5"/>
    <property type="match status" value="2"/>
</dbReference>
<dbReference type="Pfam" id="PF12999">
    <property type="entry name" value="PRKCSH-like"/>
    <property type="match status" value="1"/>
</dbReference>
<dbReference type="Pfam" id="PF13015">
    <property type="entry name" value="PRKCSH_1"/>
    <property type="match status" value="1"/>
</dbReference>
<dbReference type="SUPFAM" id="SSF47473">
    <property type="entry name" value="EF-hand"/>
    <property type="match status" value="1"/>
</dbReference>
<dbReference type="SUPFAM" id="SSF57424">
    <property type="entry name" value="LDL receptor-like module"/>
    <property type="match status" value="1"/>
</dbReference>
<dbReference type="SUPFAM" id="SSF50911">
    <property type="entry name" value="Mannose 6-phosphate receptor domain"/>
    <property type="match status" value="1"/>
</dbReference>
<dbReference type="PROSITE" id="PS00018">
    <property type="entry name" value="EF_HAND_1"/>
    <property type="match status" value="1"/>
</dbReference>
<dbReference type="PROSITE" id="PS50222">
    <property type="entry name" value="EF_HAND_2"/>
    <property type="match status" value="1"/>
</dbReference>
<dbReference type="PROSITE" id="PS00014">
    <property type="entry name" value="ER_TARGET"/>
    <property type="match status" value="1"/>
</dbReference>
<dbReference type="PROSITE" id="PS51914">
    <property type="entry name" value="MRH"/>
    <property type="match status" value="1"/>
</dbReference>
<proteinExistence type="evidence at protein level"/>
<comment type="function">
    <text evidence="8 9 10">Regulatory subunit of glucosidase II that cleaves sequentially the 2 innermost alpha-1,3-linked glucose residues from the Glc(2)Man(9)GlcNAc(2) oligosaccharide precursor of immature glycoproteins (PubMed:27462106, PubMed:9148925). Required for efficient PKD1/Polycystin-1 biogenesis and trafficking to the plasma membrane of the primary cilia (PubMed:21685914).</text>
</comment>
<comment type="pathway">
    <text evidence="9">Glycan metabolism; N-glycan metabolism.</text>
</comment>
<comment type="subunit">
    <text evidence="9 10">Heterodimer of a catalytic alpha subunit (GANAB) and a beta subunit (PRKCSH) (PubMed:27462106, PubMed:9148925). Binds glycosylated PTPRC (PubMed:9148925).</text>
</comment>
<comment type="subcellular location">
    <subcellularLocation>
        <location evidence="6">Endoplasmic reticulum</location>
    </subcellularLocation>
</comment>
<comment type="alternative products">
    <event type="alternative splicing"/>
    <isoform>
        <id>O08795-1</id>
        <name>1</name>
        <sequence type="displayed"/>
    </isoform>
    <isoform>
        <id>O08795-2</id>
        <name>2</name>
        <sequence type="described" ref="VSP_010672"/>
    </isoform>
</comment>
<comment type="tissue specificity">
    <text evidence="8">Expressed in kidney (at protein level).</text>
</comment>
<comment type="disruption phenotype">
    <text evidence="8">Knockout mice exhibit early embryonic lethality by 11.5 dpc. Conditional ubiquitous or kidney-specific knockdown results in polycystic liver and kidney phenotypes, respectively.</text>
</comment>
<name>GLU2B_MOUSE</name>
<gene>
    <name evidence="14" type="primary">Prkcsh</name>
</gene>
<reference key="1">
    <citation type="journal article" date="1997" name="J. Biol. Chem.">
        <title>Identification of the CD45-associated 116-kDa and 80-kDa proteins as the alpha- and beta-subunits of alpha-glucosidase II.</title>
        <authorList>
            <person name="Arendt C.W."/>
            <person name="Ostergaard H.L."/>
        </authorList>
    </citation>
    <scope>NUCLEOTIDE SEQUENCE [MRNA] (ISOFORM 1)</scope>
    <scope>PROTEIN SEQUENCE OF 15-49 AND 462-466</scope>
    <scope>FUNCTION</scope>
    <scope>INTERACTION WITH GANAB AND PTPRC</scope>
    <source>
        <tissue>T-cell lymphoma</tissue>
    </source>
</reference>
<reference key="2">
    <citation type="journal article" date="2004" name="Genome Res.">
        <title>The status, quality, and expansion of the NIH full-length cDNA project: the Mammalian Gene Collection (MGC).</title>
        <authorList>
            <consortium name="The MGC Project Team"/>
        </authorList>
    </citation>
    <scope>NUCLEOTIDE SEQUENCE [LARGE SCALE MRNA] (ISOFORM 2)</scope>
    <source>
        <tissue>Mammary tumor</tissue>
    </source>
</reference>
<reference key="3">
    <citation type="journal article" date="2010" name="Cell">
        <title>A tissue-specific atlas of mouse protein phosphorylation and expression.</title>
        <authorList>
            <person name="Huttlin E.L."/>
            <person name="Jedrychowski M.P."/>
            <person name="Elias J.E."/>
            <person name="Goswami T."/>
            <person name="Rad R."/>
            <person name="Beausoleil S.A."/>
            <person name="Villen J."/>
            <person name="Haas W."/>
            <person name="Sowa M.E."/>
            <person name="Gygi S.P."/>
        </authorList>
    </citation>
    <scope>IDENTIFICATION BY MASS SPECTROMETRY [LARGE SCALE ANALYSIS]</scope>
    <source>
        <tissue>Brain</tissue>
        <tissue>Brown adipose tissue</tissue>
        <tissue>Heart</tissue>
        <tissue>Kidney</tissue>
        <tissue>Liver</tissue>
        <tissue>Lung</tissue>
        <tissue>Pancreas</tissue>
        <tissue>Spleen</tissue>
        <tissue>Testis</tissue>
    </source>
</reference>
<reference key="4">
    <citation type="journal article" date="2011" name="Nat. Genet.">
        <title>A genetic interaction network of five genes for human polycystic kidney and liver diseases defines polycystin-1 as the central determinant of cyst formation.</title>
        <authorList>
            <person name="Fedeles S.V."/>
            <person name="Tian X."/>
            <person name="Gallagher A.R."/>
            <person name="Mitobe M."/>
            <person name="Nishio S."/>
            <person name="Lee S.H."/>
            <person name="Cai Y."/>
            <person name="Geng L."/>
            <person name="Crews C.M."/>
            <person name="Somlo S."/>
        </authorList>
    </citation>
    <scope>DISRUPTION PHENOTYPE</scope>
    <scope>TISSUE SPECIFICITY</scope>
    <scope>FUNCTION</scope>
</reference>
<reference key="5">
    <citation type="journal article" date="2013" name="Mol. Cell">
        <title>SIRT5-mediated lysine desuccinylation impacts diverse metabolic pathways.</title>
        <authorList>
            <person name="Park J."/>
            <person name="Chen Y."/>
            <person name="Tishkoff D.X."/>
            <person name="Peng C."/>
            <person name="Tan M."/>
            <person name="Dai L."/>
            <person name="Xie Z."/>
            <person name="Zhang Y."/>
            <person name="Zwaans B.M."/>
            <person name="Skinner M.E."/>
            <person name="Lombard D.B."/>
            <person name="Zhao Y."/>
        </authorList>
    </citation>
    <scope>SUCCINYLATION [LARGE SCALE ANALYSIS] AT LYS-166</scope>
    <scope>IDENTIFICATION BY MASS SPECTROMETRY [LARGE SCALE ANALYSIS]</scope>
    <source>
        <tissue>Embryonic fibroblast</tissue>
        <tissue>Liver</tissue>
    </source>
</reference>
<reference evidence="15 16 17 18 19 20 21 22" key="6">
    <citation type="journal article" date="2016" name="Proc. Natl. Acad. Sci. U.S.A.">
        <title>Structures of mammalian ER alpha-glucosidase II capture the binding modes of broad-spectrum iminosugar antivirals.</title>
        <authorList>
            <person name="Caputo A.T."/>
            <person name="Alonzi D.S."/>
            <person name="Marti L."/>
            <person name="Reca I.B."/>
            <person name="Kiappes J.L."/>
            <person name="Struwe W.B."/>
            <person name="Cross A."/>
            <person name="Basu S."/>
            <person name="Lowe E.D."/>
            <person name="Darlot B."/>
            <person name="Santino A."/>
            <person name="Roversi P."/>
            <person name="Zitzmann N."/>
        </authorList>
    </citation>
    <scope>X-RAY CRYSTALLOGRAPHY (1.74 ANGSTROMS) OF 30-117 IN COMPLEX WITH CALCIUM AND D-GLUCAL</scope>
    <scope>FUNCTION</scope>
    <scope>PATHWAY</scope>
    <scope>SUBUNIT</scope>
    <scope>DISULFIDE BONDS</scope>
</reference>
<sequence>MLLLLLLLLPLCWAVEVKRPRGVSLSNHHFYEESKPFTCLDGTATIPFDQVNDDYCDCKDGSDEPGTAACPNGSFHCTNTGYKPLYILSSRVNDGVCDCCDGTDEYNSGTVCENTCREKGRKEKESLQQLAEVTREGFRLKKILIEEWKTAREEKQSKLLELQAGKKSLEDQVETLRAAKEEAERPEKEAKDQHRKLWEEQQAAAKARREQERAASAFQELDDNMDGMVSLAELQTHPELDTDGDGALSEEEAQALLSGDTQTDTTSFYDRVWAAIRDKYRSEVPPTDIPVPEETEPKEEKPPVLPPTEEEEEEEEEPEEEEEEEEEEEEAPPPLQPPQPPSPTEDEKMPPYDEETQAIIDAAQEARSKFEEVERSLKEMEESIRSLEQEISFDFGPSGEFAYLYSQCYELTTNEYVYRLCPFKLVSQKPKHGGSPTSLGTWGSWAGPDHDKFSAMKYEQGTGCWQGPNRSTTVRLLCGKETVVTSTTEPSRCEYLMELMTPAACPEPPPEAPSDGDHDEL</sequence>
<organism>
    <name type="scientific">Mus musculus</name>
    <name type="common">Mouse</name>
    <dbReference type="NCBI Taxonomy" id="10090"/>
    <lineage>
        <taxon>Eukaryota</taxon>
        <taxon>Metazoa</taxon>
        <taxon>Chordata</taxon>
        <taxon>Craniata</taxon>
        <taxon>Vertebrata</taxon>
        <taxon>Euteleostomi</taxon>
        <taxon>Mammalia</taxon>
        <taxon>Eutheria</taxon>
        <taxon>Euarchontoglires</taxon>
        <taxon>Glires</taxon>
        <taxon>Rodentia</taxon>
        <taxon>Myomorpha</taxon>
        <taxon>Muroidea</taxon>
        <taxon>Muridae</taxon>
        <taxon>Murinae</taxon>
        <taxon>Mus</taxon>
        <taxon>Mus</taxon>
    </lineage>
</organism>